<feature type="chain" id="PRO_1000058251" description="Thymidylate kinase">
    <location>
        <begin position="1"/>
        <end position="213"/>
    </location>
</feature>
<feature type="binding site" evidence="1">
    <location>
        <begin position="10"/>
        <end position="17"/>
    </location>
    <ligand>
        <name>ATP</name>
        <dbReference type="ChEBI" id="CHEBI:30616"/>
    </ligand>
</feature>
<comment type="function">
    <text evidence="1">Phosphorylation of dTMP to form dTDP in both de novo and salvage pathways of dTTP synthesis.</text>
</comment>
<comment type="catalytic activity">
    <reaction evidence="1">
        <text>dTMP + ATP = dTDP + ADP</text>
        <dbReference type="Rhea" id="RHEA:13517"/>
        <dbReference type="ChEBI" id="CHEBI:30616"/>
        <dbReference type="ChEBI" id="CHEBI:58369"/>
        <dbReference type="ChEBI" id="CHEBI:63528"/>
        <dbReference type="ChEBI" id="CHEBI:456216"/>
        <dbReference type="EC" id="2.7.4.9"/>
    </reaction>
</comment>
<comment type="similarity">
    <text evidence="1">Belongs to the thymidylate kinase family.</text>
</comment>
<dbReference type="EC" id="2.7.4.9" evidence="1"/>
<dbReference type="EMBL" id="CP000653">
    <property type="protein sequence ID" value="ABP60292.1"/>
    <property type="molecule type" value="Genomic_DNA"/>
</dbReference>
<dbReference type="RefSeq" id="WP_012017008.1">
    <property type="nucleotide sequence ID" value="NC_009436.1"/>
</dbReference>
<dbReference type="SMR" id="A4W9B2"/>
<dbReference type="STRING" id="399742.Ent638_1613"/>
<dbReference type="KEGG" id="ent:Ent638_1613"/>
<dbReference type="eggNOG" id="COG0125">
    <property type="taxonomic scope" value="Bacteria"/>
</dbReference>
<dbReference type="HOGENOM" id="CLU_049131_0_1_6"/>
<dbReference type="OrthoDB" id="9774907at2"/>
<dbReference type="Proteomes" id="UP000000230">
    <property type="component" value="Chromosome"/>
</dbReference>
<dbReference type="GO" id="GO:0005829">
    <property type="term" value="C:cytosol"/>
    <property type="evidence" value="ECO:0007669"/>
    <property type="project" value="TreeGrafter"/>
</dbReference>
<dbReference type="GO" id="GO:0005524">
    <property type="term" value="F:ATP binding"/>
    <property type="evidence" value="ECO:0007669"/>
    <property type="project" value="UniProtKB-UniRule"/>
</dbReference>
<dbReference type="GO" id="GO:0004798">
    <property type="term" value="F:dTMP kinase activity"/>
    <property type="evidence" value="ECO:0007669"/>
    <property type="project" value="UniProtKB-UniRule"/>
</dbReference>
<dbReference type="GO" id="GO:0006233">
    <property type="term" value="P:dTDP biosynthetic process"/>
    <property type="evidence" value="ECO:0007669"/>
    <property type="project" value="InterPro"/>
</dbReference>
<dbReference type="GO" id="GO:0006235">
    <property type="term" value="P:dTTP biosynthetic process"/>
    <property type="evidence" value="ECO:0007669"/>
    <property type="project" value="UniProtKB-UniRule"/>
</dbReference>
<dbReference type="GO" id="GO:0006227">
    <property type="term" value="P:dUDP biosynthetic process"/>
    <property type="evidence" value="ECO:0007669"/>
    <property type="project" value="TreeGrafter"/>
</dbReference>
<dbReference type="CDD" id="cd01672">
    <property type="entry name" value="TMPK"/>
    <property type="match status" value="1"/>
</dbReference>
<dbReference type="FunFam" id="3.40.50.300:FF:000321">
    <property type="entry name" value="Thymidylate kinase"/>
    <property type="match status" value="1"/>
</dbReference>
<dbReference type="Gene3D" id="3.40.50.300">
    <property type="entry name" value="P-loop containing nucleotide triphosphate hydrolases"/>
    <property type="match status" value="1"/>
</dbReference>
<dbReference type="HAMAP" id="MF_00165">
    <property type="entry name" value="Thymidylate_kinase"/>
    <property type="match status" value="1"/>
</dbReference>
<dbReference type="InterPro" id="IPR027417">
    <property type="entry name" value="P-loop_NTPase"/>
</dbReference>
<dbReference type="InterPro" id="IPR039430">
    <property type="entry name" value="Thymidylate_kin-like_dom"/>
</dbReference>
<dbReference type="InterPro" id="IPR018095">
    <property type="entry name" value="Thymidylate_kin_CS"/>
</dbReference>
<dbReference type="InterPro" id="IPR018094">
    <property type="entry name" value="Thymidylate_kinase"/>
</dbReference>
<dbReference type="NCBIfam" id="TIGR00041">
    <property type="entry name" value="DTMP_kinase"/>
    <property type="match status" value="1"/>
</dbReference>
<dbReference type="PANTHER" id="PTHR10344">
    <property type="entry name" value="THYMIDYLATE KINASE"/>
    <property type="match status" value="1"/>
</dbReference>
<dbReference type="PANTHER" id="PTHR10344:SF4">
    <property type="entry name" value="UMP-CMP KINASE 2, MITOCHONDRIAL"/>
    <property type="match status" value="1"/>
</dbReference>
<dbReference type="Pfam" id="PF02223">
    <property type="entry name" value="Thymidylate_kin"/>
    <property type="match status" value="1"/>
</dbReference>
<dbReference type="SUPFAM" id="SSF52540">
    <property type="entry name" value="P-loop containing nucleoside triphosphate hydrolases"/>
    <property type="match status" value="1"/>
</dbReference>
<dbReference type="PROSITE" id="PS01331">
    <property type="entry name" value="THYMIDYLATE_KINASE"/>
    <property type="match status" value="1"/>
</dbReference>
<name>KTHY_ENT38</name>
<evidence type="ECO:0000255" key="1">
    <source>
        <dbReference type="HAMAP-Rule" id="MF_00165"/>
    </source>
</evidence>
<protein>
    <recommendedName>
        <fullName evidence="1">Thymidylate kinase</fullName>
        <ecNumber evidence="1">2.7.4.9</ecNumber>
    </recommendedName>
    <alternativeName>
        <fullName evidence="1">dTMP kinase</fullName>
    </alternativeName>
</protein>
<accession>A4W9B2</accession>
<sequence>MRSNYIVIEGLEGAGKTTARNVVVDTLKELGIEQMVFTREPGGTQLAEKLRSLVLDIKSVGDEVIDVKAEVLMFYAARVQLVETVIKPALAEGQWVIGDRHDLSTQAYQGGGRGIDQQMLATLRNAVLGDFRPNLTLYLDVTPEVGLKRARARGELDRIEQESLDFFNRTRARYLELAAQDDSIRTIDATQSLEGVTRSIRETITAWLQEQQA</sequence>
<reference key="1">
    <citation type="journal article" date="2010" name="PLoS Genet.">
        <title>Genome sequence of the plant growth promoting endophytic bacterium Enterobacter sp. 638.</title>
        <authorList>
            <person name="Taghavi S."/>
            <person name="van der Lelie D."/>
            <person name="Hoffman A."/>
            <person name="Zhang Y.B."/>
            <person name="Walla M.D."/>
            <person name="Vangronsveld J."/>
            <person name="Newman L."/>
            <person name="Monchy S."/>
        </authorList>
    </citation>
    <scope>NUCLEOTIDE SEQUENCE [LARGE SCALE GENOMIC DNA]</scope>
    <source>
        <strain>638</strain>
    </source>
</reference>
<gene>
    <name evidence="1" type="primary">tmk</name>
    <name type="ordered locus">Ent638_1613</name>
</gene>
<organism>
    <name type="scientific">Enterobacter sp. (strain 638)</name>
    <dbReference type="NCBI Taxonomy" id="399742"/>
    <lineage>
        <taxon>Bacteria</taxon>
        <taxon>Pseudomonadati</taxon>
        <taxon>Pseudomonadota</taxon>
        <taxon>Gammaproteobacteria</taxon>
        <taxon>Enterobacterales</taxon>
        <taxon>Enterobacteriaceae</taxon>
        <taxon>Enterobacter</taxon>
    </lineage>
</organism>
<keyword id="KW-0067">ATP-binding</keyword>
<keyword id="KW-0418">Kinase</keyword>
<keyword id="KW-0545">Nucleotide biosynthesis</keyword>
<keyword id="KW-0547">Nucleotide-binding</keyword>
<keyword id="KW-0808">Transferase</keyword>
<proteinExistence type="inferred from homology"/>